<protein>
    <recommendedName>
        <fullName evidence="1 4">Polyamine aminopropyltransferase</fullName>
    </recommendedName>
    <alternativeName>
        <fullName evidence="6">Agmatine aminopropyltransferase</fullName>
        <ecNumber evidence="2">2.5.1.104</ecNumber>
    </alternativeName>
    <alternativeName>
        <fullName evidence="6">N1-aminopropylagmatine synthase</fullName>
    </alternativeName>
    <alternativeName>
        <fullName evidence="7">Norspermidine aminopropyltransferase</fullName>
        <ecNumber evidence="3">2.5.1.126</ecNumber>
    </alternativeName>
    <alternativeName>
        <fullName evidence="7">Spermidine aminopropyltransferase</fullName>
        <ecNumber evidence="3">2.5.1.79</ecNumber>
    </alternativeName>
    <alternativeName>
        <fullName evidence="7">Spermine synthase</fullName>
        <ecNumber evidence="3">2.5.1.22</ecNumber>
    </alternativeName>
    <alternativeName>
        <fullName evidence="7">Thermine synthase</fullName>
    </alternativeName>
    <alternativeName>
        <fullName evidence="7">Thermospermine synthase</fullName>
    </alternativeName>
    <alternativeName>
        <fullName evidence="5">Triamine/agmatine aminopropyltransferase</fullName>
        <shortName evidence="5">TAAPT</shortName>
    </alternativeName>
</protein>
<gene>
    <name evidence="1" type="primary">speE</name>
    <name type="ordered locus">TTHA0824</name>
</gene>
<dbReference type="EC" id="2.5.1.104" evidence="2"/>
<dbReference type="EC" id="2.5.1.126" evidence="3"/>
<dbReference type="EC" id="2.5.1.79" evidence="3"/>
<dbReference type="EC" id="2.5.1.22" evidence="3"/>
<dbReference type="EMBL" id="AP008226">
    <property type="protein sequence ID" value="BAD70647.1"/>
    <property type="molecule type" value="Genomic_DNA"/>
</dbReference>
<dbReference type="RefSeq" id="WP_011172918.1">
    <property type="nucleotide sequence ID" value="NC_006461.1"/>
</dbReference>
<dbReference type="RefSeq" id="YP_144090.1">
    <property type="nucleotide sequence ID" value="NC_006461.1"/>
</dbReference>
<dbReference type="PDB" id="1UIR">
    <property type="method" value="X-ray"/>
    <property type="resolution" value="2.00 A"/>
    <property type="chains" value="A/B=1-314"/>
</dbReference>
<dbReference type="PDB" id="3ANX">
    <property type="method" value="X-ray"/>
    <property type="resolution" value="2.50 A"/>
    <property type="chains" value="A/B=1-314"/>
</dbReference>
<dbReference type="PDBsum" id="1UIR"/>
<dbReference type="PDBsum" id="3ANX"/>
<dbReference type="SMR" id="Q5SK28"/>
<dbReference type="EnsemblBacteria" id="BAD70647">
    <property type="protein sequence ID" value="BAD70647"/>
    <property type="gene ID" value="BAD70647"/>
</dbReference>
<dbReference type="GeneID" id="3168303"/>
<dbReference type="KEGG" id="ttj:TTHA0824"/>
<dbReference type="PATRIC" id="fig|300852.9.peg.818"/>
<dbReference type="eggNOG" id="COG0421">
    <property type="taxonomic scope" value="Bacteria"/>
</dbReference>
<dbReference type="HOGENOM" id="CLU_048199_0_1_0"/>
<dbReference type="PhylomeDB" id="Q5SK28"/>
<dbReference type="BioCyc" id="MetaCyc:MONOMER-16736"/>
<dbReference type="BRENDA" id="2.5.1.104">
    <property type="organism ID" value="2305"/>
</dbReference>
<dbReference type="SABIO-RK" id="Q5SK28"/>
<dbReference type="EvolutionaryTrace" id="Q5SK28"/>
<dbReference type="Proteomes" id="UP000000532">
    <property type="component" value="Chromosome"/>
</dbReference>
<dbReference type="GO" id="GO:0005737">
    <property type="term" value="C:cytoplasm"/>
    <property type="evidence" value="ECO:0007669"/>
    <property type="project" value="UniProtKB-SubCell"/>
</dbReference>
<dbReference type="GO" id="GO:0043919">
    <property type="term" value="F:agmatine aminopropyltransferase activity"/>
    <property type="evidence" value="ECO:0000314"/>
    <property type="project" value="UniProtKB"/>
</dbReference>
<dbReference type="GO" id="GO:0004766">
    <property type="term" value="F:spermidine synthase activity"/>
    <property type="evidence" value="ECO:0007669"/>
    <property type="project" value="UniProtKB-UniRule"/>
</dbReference>
<dbReference type="GO" id="GO:0016768">
    <property type="term" value="F:spermine synthase activity"/>
    <property type="evidence" value="ECO:0007669"/>
    <property type="project" value="UniProtKB-EC"/>
</dbReference>
<dbReference type="GO" id="GO:0010487">
    <property type="term" value="F:thermospermine synthase activity"/>
    <property type="evidence" value="ECO:0000314"/>
    <property type="project" value="UniProtKB"/>
</dbReference>
<dbReference type="GO" id="GO:0006596">
    <property type="term" value="P:polyamine biosynthetic process"/>
    <property type="evidence" value="ECO:0000314"/>
    <property type="project" value="UniProtKB"/>
</dbReference>
<dbReference type="GO" id="GO:0008295">
    <property type="term" value="P:spermidine biosynthetic process"/>
    <property type="evidence" value="ECO:0007669"/>
    <property type="project" value="UniProtKB-UniRule"/>
</dbReference>
<dbReference type="CDD" id="cd02440">
    <property type="entry name" value="AdoMet_MTases"/>
    <property type="match status" value="1"/>
</dbReference>
<dbReference type="FunFam" id="3.40.50.150:FF:000088">
    <property type="entry name" value="Polyamine aminopropyltransferase"/>
    <property type="match status" value="1"/>
</dbReference>
<dbReference type="Gene3D" id="2.30.140.10">
    <property type="entry name" value="Spermidine synthase, tetramerisation domain"/>
    <property type="match status" value="1"/>
</dbReference>
<dbReference type="Gene3D" id="3.40.50.150">
    <property type="entry name" value="Vaccinia Virus protein VP39"/>
    <property type="match status" value="1"/>
</dbReference>
<dbReference type="HAMAP" id="MF_00198">
    <property type="entry name" value="Spermidine_synth"/>
    <property type="match status" value="1"/>
</dbReference>
<dbReference type="InterPro" id="IPR030374">
    <property type="entry name" value="PABS"/>
</dbReference>
<dbReference type="InterPro" id="IPR030373">
    <property type="entry name" value="PABS_CS"/>
</dbReference>
<dbReference type="InterPro" id="IPR029063">
    <property type="entry name" value="SAM-dependent_MTases_sf"/>
</dbReference>
<dbReference type="InterPro" id="IPR001045">
    <property type="entry name" value="Spermi_synthase"/>
</dbReference>
<dbReference type="InterPro" id="IPR035246">
    <property type="entry name" value="Spermidine_synt_N"/>
</dbReference>
<dbReference type="InterPro" id="IPR037163">
    <property type="entry name" value="Spermidine_synt_N_sf"/>
</dbReference>
<dbReference type="NCBIfam" id="NF037959">
    <property type="entry name" value="MFS_SpdSyn"/>
    <property type="match status" value="1"/>
</dbReference>
<dbReference type="NCBIfam" id="NF002010">
    <property type="entry name" value="PRK00811.1"/>
    <property type="match status" value="1"/>
</dbReference>
<dbReference type="PANTHER" id="PTHR43317">
    <property type="entry name" value="THERMOSPERMINE SYNTHASE ACAULIS5"/>
    <property type="match status" value="1"/>
</dbReference>
<dbReference type="PANTHER" id="PTHR43317:SF1">
    <property type="entry name" value="THERMOSPERMINE SYNTHASE ACAULIS5"/>
    <property type="match status" value="1"/>
</dbReference>
<dbReference type="Pfam" id="PF17284">
    <property type="entry name" value="Spermine_synt_N"/>
    <property type="match status" value="1"/>
</dbReference>
<dbReference type="Pfam" id="PF01564">
    <property type="entry name" value="Spermine_synth"/>
    <property type="match status" value="1"/>
</dbReference>
<dbReference type="SUPFAM" id="SSF53335">
    <property type="entry name" value="S-adenosyl-L-methionine-dependent methyltransferases"/>
    <property type="match status" value="1"/>
</dbReference>
<dbReference type="PROSITE" id="PS01330">
    <property type="entry name" value="PABS_1"/>
    <property type="match status" value="1"/>
</dbReference>
<dbReference type="PROSITE" id="PS51006">
    <property type="entry name" value="PABS_2"/>
    <property type="match status" value="1"/>
</dbReference>
<comment type="function">
    <text evidence="2 3">Involved in the biosynthesis of polyamines which are thought to support the growth of thermophilic microorganisms under high-temperature conditions. It seems that long-chain and branched-chain of polyamines effectively stabilize DNA and RNA, respectively. Catalyzes the irreversible transfer of a propylamine group from the amino donor S-adenosylmethioninamine (decarboxy-AdoMet) to agmatine to yield N1-aminopropylagmatine. An efficient aminopropyltransferase activity has been also observed with norspermidine which produces thermine, and spermidine which produces spermine and thermospermine. The aminopropyl activity with homospermidine, mitsubishine, thermine, 1,3-diaminopropane, putrescine (1,4-diaminobutane), spermine and caldopentamine are very low. The reaction involves a nucleophilic attack on the C-3 methylene of the propylamine moiety adjacent to the positively charged sulfur of decarboxy-AdoMet.</text>
</comment>
<comment type="catalytic activity">
    <reaction evidence="2 3">
        <text>S-adenosyl 3-(methylsulfanyl)propylamine + agmatine = N(1)-(3-aminopropyl)agmatine + S-methyl-5'-thioadenosine + H(+)</text>
        <dbReference type="Rhea" id="RHEA:36487"/>
        <dbReference type="ChEBI" id="CHEBI:15378"/>
        <dbReference type="ChEBI" id="CHEBI:17509"/>
        <dbReference type="ChEBI" id="CHEBI:57443"/>
        <dbReference type="ChEBI" id="CHEBI:58145"/>
        <dbReference type="ChEBI" id="CHEBI:64335"/>
        <dbReference type="EC" id="2.5.1.104"/>
    </reaction>
</comment>
<comment type="catalytic activity">
    <reaction evidence="3">
        <text>norspermidine + S-adenosyl 3-(methylsulfanyl)propylamine = norspermine + S-methyl-5'-thioadenosine + H(+)</text>
        <dbReference type="Rhea" id="RHEA:42864"/>
        <dbReference type="ChEBI" id="CHEBI:15378"/>
        <dbReference type="ChEBI" id="CHEBI:17509"/>
        <dbReference type="ChEBI" id="CHEBI:57443"/>
        <dbReference type="ChEBI" id="CHEBI:57920"/>
        <dbReference type="ChEBI" id="CHEBI:58704"/>
        <dbReference type="EC" id="2.5.1.126"/>
    </reaction>
</comment>
<comment type="catalytic activity">
    <reaction evidence="3">
        <text>S-adenosyl 3-(methylsulfanyl)propylamine + spermidine = thermospermine + S-methyl-5'-thioadenosine + H(+)</text>
        <dbReference type="Rhea" id="RHEA:30515"/>
        <dbReference type="ChEBI" id="CHEBI:15378"/>
        <dbReference type="ChEBI" id="CHEBI:17509"/>
        <dbReference type="ChEBI" id="CHEBI:57443"/>
        <dbReference type="ChEBI" id="CHEBI:57834"/>
        <dbReference type="ChEBI" id="CHEBI:59903"/>
        <dbReference type="EC" id="2.5.1.79"/>
    </reaction>
</comment>
<comment type="catalytic activity">
    <reaction evidence="3">
        <text>S-adenosyl 3-(methylsulfanyl)propylamine + spermidine = spermine + S-methyl-5'-thioadenosine + H(+)</text>
        <dbReference type="Rhea" id="RHEA:19973"/>
        <dbReference type="ChEBI" id="CHEBI:15378"/>
        <dbReference type="ChEBI" id="CHEBI:17509"/>
        <dbReference type="ChEBI" id="CHEBI:45725"/>
        <dbReference type="ChEBI" id="CHEBI:57443"/>
        <dbReference type="ChEBI" id="CHEBI:57834"/>
        <dbReference type="EC" id="2.5.1.22"/>
    </reaction>
</comment>
<comment type="biophysicochemical properties">
    <kinetics>
        <KM evidence="3">0.57 uM for norspermidine (at pH 9 and 37 degrees Celsius)</KM>
        <KM evidence="2">0.77 uM for agmatine (at pH 9 and 37 degrees Celsius)</KM>
        <KM evidence="3">1.64 uM for S-adenosylmethioninamine (at pH 9 and 37 degrees Celsius)</KM>
        <KM evidence="3">1.73 uM for spermidine (at pH 9 and 37 degrees Celsius)</KM>
        <KM evidence="3">38.3 uM for mitsubishine (at pH 9 and 37 degrees Celsius)</KM>
        <text evidence="3">kcat is 0.73 sec(-1) for aminopropyl transferase activity with S-adenosylmethioninamine as substrate (at pH 9 and 37 degrees Celsius). kcat is 0.65 sec(-1) for aminopropyl transferase activity with spermidine as substrate (at pH 9 and 37 degrees Celsius). kcat is 0.53 sec(-1) for aminopropyl transferase activity with norspermidine as substrate (at pH 9 and 37 degrees Celsius). kcat is 0.37 sec(-1) for aminopropyl transferase activity with agmatine as substrate (at pH 9 and 37 degrees Celsius). kcat is 0.29 sec(-1) for aminopropyl transferase activity with mitsubishine as substrate (at pH 9 and 37 degrees Celsius).</text>
    </kinetics>
    <phDependence>
        <text evidence="3">Optimum pH is 8.5 at 60 degrees Celsius.</text>
    </phDependence>
    <temperatureDependence>
        <text evidence="3">Optimum temperature is above 80 degrees Celsius.</text>
    </temperatureDependence>
</comment>
<comment type="subunit">
    <text evidence="3">Homotetramer.</text>
</comment>
<comment type="subcellular location">
    <subcellularLocation>
        <location evidence="1">Cytoplasm</location>
    </subcellularLocation>
</comment>
<comment type="disruption phenotype">
    <text evidence="2">Cells lacking both speB and speE genes show defective growth at 70 degrees Celsius and significantly defective growth at 78 degrees Celsius. They accumulate agmatine and N1-aminopropylagmatine.</text>
</comment>
<comment type="miscellaneous">
    <text evidence="6">In T.thermophilus, the biosynthetic pathways of spermidine operates via N1-aminopropylagmatine without the production of putrescine.</text>
</comment>
<comment type="similarity">
    <text evidence="1">Belongs to the spermidine/spermine synthase family.</text>
</comment>
<name>SPEE_THET8</name>
<feature type="chain" id="PRO_1000012028" description="Polyamine aminopropyltransferase">
    <location>
        <begin position="1"/>
        <end position="314"/>
    </location>
</feature>
<feature type="domain" description="PABS" evidence="1">
    <location>
        <begin position="4"/>
        <end position="241"/>
    </location>
</feature>
<feature type="active site" description="Proton acceptor" evidence="1">
    <location>
        <position position="158"/>
    </location>
</feature>
<feature type="binding site" evidence="1 3 8">
    <location>
        <position position="33"/>
    </location>
    <ligand>
        <name>S-methyl-5'-thioadenosine</name>
        <dbReference type="ChEBI" id="CHEBI:17509"/>
    </ligand>
</feature>
<feature type="binding site" evidence="1">
    <location>
        <position position="64"/>
    </location>
    <ligand>
        <name>spermidine</name>
        <dbReference type="ChEBI" id="CHEBI:57834"/>
    </ligand>
</feature>
<feature type="binding site" evidence="1">
    <location>
        <position position="88"/>
    </location>
    <ligand>
        <name>spermidine</name>
        <dbReference type="ChEBI" id="CHEBI:57834"/>
    </ligand>
</feature>
<feature type="binding site" evidence="1 3 8">
    <location>
        <position position="108"/>
    </location>
    <ligand>
        <name>S-methyl-5'-thioadenosine</name>
        <dbReference type="ChEBI" id="CHEBI:17509"/>
    </ligand>
</feature>
<feature type="binding site" evidence="1 3 8">
    <location>
        <begin position="140"/>
        <end position="141"/>
    </location>
    <ligand>
        <name>S-methyl-5'-thioadenosine</name>
        <dbReference type="ChEBI" id="CHEBI:17509"/>
    </ligand>
</feature>
<feature type="binding site" evidence="1">
    <location>
        <begin position="158"/>
        <end position="161"/>
    </location>
    <ligand>
        <name>spermidine</name>
        <dbReference type="ChEBI" id="CHEBI:57834"/>
    </ligand>
</feature>
<feature type="binding site" evidence="1">
    <location>
        <position position="168"/>
    </location>
    <ligand>
        <name>S-methyl-5'-thioadenosine</name>
        <dbReference type="ChEBI" id="CHEBI:17509"/>
    </ligand>
</feature>
<feature type="strand" evidence="9">
    <location>
        <begin position="6"/>
        <end position="20"/>
    </location>
</feature>
<feature type="strand" evidence="9">
    <location>
        <begin position="22"/>
        <end position="29"/>
    </location>
</feature>
<feature type="strand" evidence="9">
    <location>
        <begin position="34"/>
        <end position="40"/>
    </location>
</feature>
<feature type="turn" evidence="9">
    <location>
        <begin position="41"/>
        <end position="43"/>
    </location>
</feature>
<feature type="strand" evidence="9">
    <location>
        <begin position="44"/>
        <end position="49"/>
    </location>
</feature>
<feature type="strand" evidence="9">
    <location>
        <begin position="52"/>
        <end position="56"/>
    </location>
</feature>
<feature type="turn" evidence="9">
    <location>
        <begin position="57"/>
        <end position="59"/>
    </location>
</feature>
<feature type="helix" evidence="9">
    <location>
        <begin position="60"/>
        <end position="74"/>
    </location>
</feature>
<feature type="strand" evidence="10">
    <location>
        <begin position="75"/>
        <end position="77"/>
    </location>
</feature>
<feature type="strand" evidence="9">
    <location>
        <begin position="80"/>
        <end position="85"/>
    </location>
</feature>
<feature type="helix" evidence="9">
    <location>
        <begin position="90"/>
        <end position="95"/>
    </location>
</feature>
<feature type="strand" evidence="9">
    <location>
        <begin position="103"/>
        <end position="109"/>
    </location>
</feature>
<feature type="helix" evidence="9">
    <location>
        <begin position="111"/>
        <end position="120"/>
    </location>
</feature>
<feature type="helix" evidence="9">
    <location>
        <begin position="122"/>
        <end position="125"/>
    </location>
</feature>
<feature type="helix" evidence="9">
    <location>
        <begin position="128"/>
        <end position="130"/>
    </location>
</feature>
<feature type="strand" evidence="9">
    <location>
        <begin position="134"/>
        <end position="139"/>
    </location>
</feature>
<feature type="helix" evidence="9">
    <location>
        <begin position="141"/>
        <end position="147"/>
    </location>
</feature>
<feature type="strand" evidence="9">
    <location>
        <begin position="152"/>
        <end position="158"/>
    </location>
</feature>
<feature type="helix" evidence="9">
    <location>
        <begin position="168"/>
        <end position="172"/>
    </location>
</feature>
<feature type="helix" evidence="9">
    <location>
        <begin position="175"/>
        <end position="183"/>
    </location>
</feature>
<feature type="strand" evidence="9">
    <location>
        <begin position="185"/>
        <end position="198"/>
    </location>
</feature>
<feature type="turn" evidence="10">
    <location>
        <begin position="200"/>
        <end position="202"/>
    </location>
</feature>
<feature type="helix" evidence="9">
    <location>
        <begin position="205"/>
        <end position="214"/>
    </location>
</feature>
<feature type="strand" evidence="9">
    <location>
        <begin position="218"/>
        <end position="226"/>
    </location>
</feature>
<feature type="helix" evidence="9">
    <location>
        <begin position="228"/>
        <end position="230"/>
    </location>
</feature>
<feature type="strand" evidence="9">
    <location>
        <begin position="232"/>
        <end position="243"/>
    </location>
</feature>
<feature type="helix" evidence="9">
    <location>
        <begin position="252"/>
        <end position="259"/>
    </location>
</feature>
<feature type="helix" evidence="9">
    <location>
        <begin position="269"/>
        <end position="274"/>
    </location>
</feature>
<feature type="helix" evidence="9">
    <location>
        <begin position="280"/>
        <end position="288"/>
    </location>
</feature>
<feature type="strand" evidence="9">
    <location>
        <begin position="295"/>
        <end position="297"/>
    </location>
</feature>
<feature type="strand" evidence="9">
    <location>
        <begin position="299"/>
        <end position="301"/>
    </location>
</feature>
<feature type="strand" evidence="9">
    <location>
        <begin position="307"/>
        <end position="309"/>
    </location>
</feature>
<proteinExistence type="evidence at protein level"/>
<accession>Q5SK28</accession>
<accession>P83816</accession>
<sequence>MDYGMYFFEHVTPYETLVRRMERVIASGKTPFQDYFLFESKGFGKVLILDKDVQSTERDEYIYHETLVHPAMLTHPEPKRVLIVGGGEGATLREVLKHPTVEKAVMVDIDGELVEVAKRHMPEWHQGAFDDPRAVLVIDDARAYLERTEERYDVVIIDLTDPVGEDNPARLLYTVEFYRLVKAHLNPGGVMGMQAGMILLTHHRVHPVVHRTVREAFRYVRSYKNHIPGFFLNFGFLLASDAFDPAAFSEGVIEARIRERNLALRHLTAPYLEAMFVLPKDLLEALEKETMVSTDQNPFYVTPEGEARQAPYKG</sequence>
<reference key="1">
    <citation type="submission" date="2004-11" db="EMBL/GenBank/DDBJ databases">
        <title>Complete genome sequence of Thermus thermophilus HB8.</title>
        <authorList>
            <person name="Masui R."/>
            <person name="Kurokawa K."/>
            <person name="Nakagawa N."/>
            <person name="Tokunaga F."/>
            <person name="Koyama Y."/>
            <person name="Shibata T."/>
            <person name="Oshima T."/>
            <person name="Yokoyama S."/>
            <person name="Yasunaga T."/>
            <person name="Kuramitsu S."/>
        </authorList>
    </citation>
    <scope>NUCLEOTIDE SEQUENCE [LARGE SCALE GENOMIC DNA]</scope>
    <source>
        <strain>ATCC 27634 / DSM 579 / HB8</strain>
    </source>
</reference>
<reference key="2">
    <citation type="journal article" date="2005" name="J. Biol. Chem.">
        <title>N1-aminopropylagmatine, a new polyamine produced as a key intermediate in polyamine biosynthesis of an extreme thermophile, Thermus thermophilus.</title>
        <authorList>
            <person name="Ohnuma M."/>
            <person name="Terui Y."/>
            <person name="Tamakoshi M."/>
            <person name="Mitome H."/>
            <person name="Niitsu M."/>
            <person name="Samejima K."/>
            <person name="Kawashima E."/>
            <person name="Oshima T."/>
        </authorList>
    </citation>
    <scope>FUNCTION</scope>
    <scope>CATALYTIC ACTIVITY</scope>
    <scope>DISRUPTION PHENOTYPE</scope>
    <scope>BIOPHYSICOCHEMICAL PROPERTIES</scope>
    <source>
        <strain>ATCC 27634 / DSM 579 / HB8</strain>
    </source>
</reference>
<reference key="3">
    <citation type="submission" date="2003-07" db="PDB data bank">
        <title>Crystal structure of polyamine aminopropyltransferase from Thermus thermophilus.</title>
        <authorList>
            <consortium name="RIKEN structural genomics initiative (RSGI)"/>
        </authorList>
    </citation>
    <scope>X-RAY CRYSTALLOGRAPHY (2.0 ANGSTROMS)</scope>
</reference>
<reference key="4">
    <citation type="journal article" date="2011" name="J. Mol. Biol.">
        <title>Crystal structures and enzymatic properties of a triamine/agmatine aminopropyltransferase from Thermus thermophilus.</title>
        <authorList>
            <person name="Ohnuma M."/>
            <person name="Ganbe T."/>
            <person name="Terui Y."/>
            <person name="Niitsu M."/>
            <person name="Sato T."/>
            <person name="Tanaka N."/>
            <person name="Tamakoshi M."/>
            <person name="Samejima K."/>
            <person name="Kumasaka T."/>
            <person name="Oshima T."/>
        </authorList>
    </citation>
    <scope>X-RAY CRYSTALLOGRAPHY (2.5 ANGSTROMS) IN COMPLEX WITH S-METHYL-5'-THIOADENOSINE</scope>
    <scope>FUNCTION</scope>
    <scope>CATALYTIC ACTIVITY</scope>
    <scope>BIOPHYSICOCHEMICAL PROPERTIES</scope>
    <scope>SUBSTRATE SPECIFICITY</scope>
    <scope>SUBUNIT</scope>
</reference>
<evidence type="ECO:0000255" key="1">
    <source>
        <dbReference type="HAMAP-Rule" id="MF_00198"/>
    </source>
</evidence>
<evidence type="ECO:0000269" key="2">
    <source>
    </source>
</evidence>
<evidence type="ECO:0000269" key="3">
    <source>
    </source>
</evidence>
<evidence type="ECO:0000303" key="4">
    <source>
    </source>
</evidence>
<evidence type="ECO:0000303" key="5">
    <source>
    </source>
</evidence>
<evidence type="ECO:0000305" key="6">
    <source>
    </source>
</evidence>
<evidence type="ECO:0000305" key="7">
    <source>
    </source>
</evidence>
<evidence type="ECO:0007744" key="8">
    <source>
        <dbReference type="PDB" id="3ANX"/>
    </source>
</evidence>
<evidence type="ECO:0007829" key="9">
    <source>
        <dbReference type="PDB" id="1UIR"/>
    </source>
</evidence>
<evidence type="ECO:0007829" key="10">
    <source>
        <dbReference type="PDB" id="3ANX"/>
    </source>
</evidence>
<keyword id="KW-0002">3D-structure</keyword>
<keyword id="KW-0963">Cytoplasm</keyword>
<keyword id="KW-0620">Polyamine biosynthesis</keyword>
<keyword id="KW-1185">Reference proteome</keyword>
<keyword id="KW-0808">Transferase</keyword>
<organism>
    <name type="scientific">Thermus thermophilus (strain ATCC 27634 / DSM 579 / HB8)</name>
    <dbReference type="NCBI Taxonomy" id="300852"/>
    <lineage>
        <taxon>Bacteria</taxon>
        <taxon>Thermotogati</taxon>
        <taxon>Deinococcota</taxon>
        <taxon>Deinococci</taxon>
        <taxon>Thermales</taxon>
        <taxon>Thermaceae</taxon>
        <taxon>Thermus</taxon>
    </lineage>
</organism>